<sequence>MTCDDFRAEDEQPIEVDERRRRLKRKANDDDDDDETVRERVDDAESSMEVFEAEYPPILDPLQDQREAKYFRERMQRFDLYSRTTGLSVDDIDWPLIRGRSLQKGRVAGISFVYDDTRYPINRFSDTWLLCVTKQKLFSFGAGCVEDLNITSFVLRRTMKVLSTYCNWLFEAAKRNNRRHITHKEIQELINRDGFRFHQYLQKFLIGRGMEYTEYNNRFFKYLHEEYNKNPGGLETIYSNQDFIAKETAQANYIYDTVRAKYGGFEELPLFRHALKISFTQPGEHYFSRFYAKRFHEALGCPPLDSEIIMILDWFGVLIMNQIAYKTIRWHEEEYNDGSFPVLDSYHKALADESKCPKACLISISLFPDDPLFDLDIDYGTNPPPVNTAYQKVRRTPRDPTPFYRLMEFEDYKSCLVKMHFNFSELTGEWLRKICARGR</sequence>
<evidence type="ECO:0000250" key="1"/>
<evidence type="ECO:0000250" key="2">
    <source>
        <dbReference type="UniProtKB" id="P34691"/>
    </source>
</evidence>
<evidence type="ECO:0000256" key="3">
    <source>
        <dbReference type="SAM" id="MobiDB-lite"/>
    </source>
</evidence>
<evidence type="ECO:0000269" key="4">
    <source>
    </source>
</evidence>
<evidence type="ECO:0000305" key="5"/>
<evidence type="ECO:0000312" key="6">
    <source>
        <dbReference type="EMBL" id="AAN28011.1"/>
    </source>
</evidence>
<reference evidence="5 6" key="1">
    <citation type="journal article" date="2002" name="Curr. Biol.">
        <title>Rapid coevolution of the nematode sex-determining genes fem-3 and tra-2.</title>
        <authorList>
            <person name="Haag E.S."/>
            <person name="Wang S."/>
            <person name="Kimble J."/>
        </authorList>
    </citation>
    <scope>NUCLEOTIDE SEQUENCE [GENOMIC DNA]</scope>
    <scope>FUNCTION</scope>
    <scope>INTERACTION WITH TRA-2</scope>
    <source>
        <strain evidence="6">SB146</strain>
    </source>
</reference>
<dbReference type="EMBL" id="AY142113">
    <property type="protein sequence ID" value="AAN28011.1"/>
    <property type="molecule type" value="Genomic_DNA"/>
</dbReference>
<dbReference type="IntAct" id="Q8I8W7">
    <property type="interactions" value="1"/>
</dbReference>
<dbReference type="eggNOG" id="ENOG502TI3W">
    <property type="taxonomic scope" value="Eukaryota"/>
</dbReference>
<dbReference type="HOGENOM" id="CLU_615752_0_0_1"/>
<dbReference type="GO" id="GO:0030154">
    <property type="term" value="P:cell differentiation"/>
    <property type="evidence" value="ECO:0007669"/>
    <property type="project" value="UniProtKB-KW"/>
</dbReference>
<dbReference type="GO" id="GO:0019102">
    <property type="term" value="P:male somatic sex determination"/>
    <property type="evidence" value="ECO:0000315"/>
    <property type="project" value="UniProtKB"/>
</dbReference>
<dbReference type="GO" id="GO:0007548">
    <property type="term" value="P:sex differentiation"/>
    <property type="evidence" value="ECO:0007669"/>
    <property type="project" value="UniProtKB-KW"/>
</dbReference>
<dbReference type="GO" id="GO:0007283">
    <property type="term" value="P:spermatogenesis"/>
    <property type="evidence" value="ECO:0007669"/>
    <property type="project" value="UniProtKB-KW"/>
</dbReference>
<gene>
    <name evidence="6" type="primary">fem-3</name>
</gene>
<proteinExistence type="evidence at protein level"/>
<organism>
    <name type="scientific">Caenorhabditis remanei</name>
    <name type="common">Caenorhabditis vulgaris</name>
    <dbReference type="NCBI Taxonomy" id="31234"/>
    <lineage>
        <taxon>Eukaryota</taxon>
        <taxon>Metazoa</taxon>
        <taxon>Ecdysozoa</taxon>
        <taxon>Nematoda</taxon>
        <taxon>Chromadorea</taxon>
        <taxon>Rhabditida</taxon>
        <taxon>Rhabditina</taxon>
        <taxon>Rhabditomorpha</taxon>
        <taxon>Rhabditoidea</taxon>
        <taxon>Rhabditidae</taxon>
        <taxon>Peloderinae</taxon>
        <taxon>Caenorhabditis</taxon>
    </lineage>
</organism>
<feature type="chain" id="PRO_0000087221" description="Sex-determination protein fem-3">
    <location>
        <begin position="1"/>
        <end position="439"/>
    </location>
</feature>
<feature type="region of interest" description="Disordered" evidence="3">
    <location>
        <begin position="21"/>
        <end position="45"/>
    </location>
</feature>
<accession>Q8I8W7</accession>
<keyword id="KW-0217">Developmental protein</keyword>
<keyword id="KW-0221">Differentiation</keyword>
<keyword id="KW-0726">Sexual differentiation</keyword>
<keyword id="KW-0744">Spermatogenesis</keyword>
<keyword id="KW-0833">Ubl conjugation pathway</keyword>
<name>FEM3_CAERE</name>
<protein>
    <recommendedName>
        <fullName>Sex-determination protein fem-3</fullName>
    </recommendedName>
    <alternativeName>
        <fullName>Cr-FEM-3</fullName>
    </alternativeName>
</protein>
<comment type="function">
    <text evidence="1 4">Required for male development. In XO (male) animals, fem-3 directs male differentiation in all tissues. In XX (hermaphrodite) animals, it specifies the first 80 or so germ cells to be sperm. Negatively regulates male development when bound to tra-2. Together with fem-2 associates with the CBC(fem-1) E3 ubiquitin-protein ligase complex which mediates the ubiquitination and subsequent proteasomal degradation of tra-1 (By similarity).</text>
</comment>
<comment type="subunit">
    <text evidence="2">Component of a complex containing fem-1, fem-2 and fem-3. Interacts with fem-1 and fem-2 (via N-terminus). Part of a E3 ubiquitin-protein ligase complex, at least composed of cul-2, elc-1, tra-1, fem-1, fem-2 and fem-3; mediates the ubiquitination and subsequent proteasomal degradation of tra-1. Interacts with tra-1. Interacts with sel-10. Interacts with tra-2.</text>
</comment>